<sequence length="254" mass="29553">MVPISMAPDRGANSLVSLRFTTFAVSTVCLPLFAFLFCIVWSLLFNFSETTETHCHVPNYLPSVSAAIGGETPQRYLWRLCIGLHSAPRFLVAMAYLKYYQGTPCSNPYYPRLCHINFLLNSCEIFFLMLLTYVSSSENHEVHKLGFMSFMFFSLGYMFVTCTLWRMTRKWSGSPEERTSYAWKKRLFGFYLLMFLASIVVYIWHNMYCEPGVYTLFAFLEYLVVLSNMAFHMTAWWDFGNKELMICSPGDKRI</sequence>
<evidence type="ECO:0000250" key="1">
    <source>
        <dbReference type="UniProtKB" id="Q2ABP2"/>
    </source>
</evidence>
<evidence type="ECO:0000250" key="2">
    <source>
        <dbReference type="UniProtKB" id="Q9UHJ9"/>
    </source>
</evidence>
<evidence type="ECO:0000255" key="3"/>
<evidence type="ECO:0000305" key="4"/>
<protein>
    <recommendedName>
        <fullName evidence="4">Acyltransferase PGAP2</fullName>
        <ecNumber evidence="1">2.3.-.-</ecNumber>
    </recommendedName>
    <alternativeName>
        <fullName>Post-GPI attachment to proteins factor 2</fullName>
    </alternativeName>
</protein>
<keyword id="KW-0333">Golgi apparatus</keyword>
<keyword id="KW-0337">GPI-anchor biosynthesis</keyword>
<keyword id="KW-0472">Membrane</keyword>
<keyword id="KW-1185">Reference proteome</keyword>
<keyword id="KW-0808">Transferase</keyword>
<keyword id="KW-0812">Transmembrane</keyword>
<keyword id="KW-1133">Transmembrane helix</keyword>
<reference key="1">
    <citation type="submission" date="2004-12" db="EMBL/GenBank/DDBJ databases">
        <authorList>
            <consortium name="NIH - Xenopus Gene Collection (XGC) project"/>
        </authorList>
    </citation>
    <scope>NUCLEOTIDE SEQUENCE [LARGE SCALE MRNA]</scope>
    <source>
        <tissue>Testis</tissue>
    </source>
</reference>
<proteinExistence type="evidence at transcript level"/>
<gene>
    <name evidence="2" type="primary">pgap2</name>
</gene>
<comment type="function">
    <text evidence="1">Involved in the fatty acid remodeling steps of GPI-anchor maturation where the unsaturated acyl chain at sn-2 of inositol phosphate is replaced by a saturated stearoyl chain. May catalyze the second step of the fatty acid remodeling, by reacylating a lyso-GPI intermediate at sn-2 of inositol phosphate by a saturated chain. The fatty acid remodeling steps is critical for the integration of GPI-APs into lipid rafts.</text>
</comment>
<comment type="subcellular location">
    <subcellularLocation>
        <location evidence="2">Golgi apparatus membrane</location>
        <topology evidence="3">Multi-pass membrane protein</topology>
    </subcellularLocation>
</comment>
<comment type="similarity">
    <text evidence="4">Belongs to the PGAP2 family.</text>
</comment>
<organism>
    <name type="scientific">Xenopus laevis</name>
    <name type="common">African clawed frog</name>
    <dbReference type="NCBI Taxonomy" id="8355"/>
    <lineage>
        <taxon>Eukaryota</taxon>
        <taxon>Metazoa</taxon>
        <taxon>Chordata</taxon>
        <taxon>Craniata</taxon>
        <taxon>Vertebrata</taxon>
        <taxon>Euteleostomi</taxon>
        <taxon>Amphibia</taxon>
        <taxon>Batrachia</taxon>
        <taxon>Anura</taxon>
        <taxon>Pipoidea</taxon>
        <taxon>Pipidae</taxon>
        <taxon>Xenopodinae</taxon>
        <taxon>Xenopus</taxon>
        <taxon>Xenopus</taxon>
    </lineage>
</organism>
<dbReference type="EC" id="2.3.-.-" evidence="1"/>
<dbReference type="EMBL" id="BC087380">
    <property type="protein sequence ID" value="AAH87380.1"/>
    <property type="molecule type" value="mRNA"/>
</dbReference>
<dbReference type="RefSeq" id="NP_001088840.1">
    <property type="nucleotide sequence ID" value="NM_001095371.1"/>
</dbReference>
<dbReference type="SMR" id="Q5M9A7"/>
<dbReference type="DNASU" id="496149"/>
<dbReference type="GeneID" id="496149"/>
<dbReference type="KEGG" id="xla:496149"/>
<dbReference type="AGR" id="Xenbase:XB-GENE-6252506"/>
<dbReference type="CTD" id="496149"/>
<dbReference type="Xenbase" id="XB-GENE-6252506">
    <property type="gene designation" value="pgap2.L"/>
</dbReference>
<dbReference type="OrthoDB" id="68581at2759"/>
<dbReference type="Proteomes" id="UP000186698">
    <property type="component" value="Chromosome 2L"/>
</dbReference>
<dbReference type="Bgee" id="496149">
    <property type="expression patterns" value="Expressed in testis and 19 other cell types or tissues"/>
</dbReference>
<dbReference type="GO" id="GO:0005789">
    <property type="term" value="C:endoplasmic reticulum membrane"/>
    <property type="evidence" value="ECO:0000250"/>
    <property type="project" value="UniProtKB"/>
</dbReference>
<dbReference type="GO" id="GO:0000139">
    <property type="term" value="C:Golgi membrane"/>
    <property type="evidence" value="ECO:0000250"/>
    <property type="project" value="UniProtKB"/>
</dbReference>
<dbReference type="GO" id="GO:0006506">
    <property type="term" value="P:GPI anchor biosynthetic process"/>
    <property type="evidence" value="ECO:0000250"/>
    <property type="project" value="UniProtKB"/>
</dbReference>
<dbReference type="InterPro" id="IPR019402">
    <property type="entry name" value="Frag1/DRAM/Sfk1"/>
</dbReference>
<dbReference type="InterPro" id="IPR039545">
    <property type="entry name" value="PGAP2"/>
</dbReference>
<dbReference type="PANTHER" id="PTHR12892">
    <property type="entry name" value="FGF RECEPTOR ACTIVATING PROTEIN 1"/>
    <property type="match status" value="1"/>
</dbReference>
<dbReference type="PANTHER" id="PTHR12892:SF11">
    <property type="entry name" value="POST-GPI ATTACHMENT TO PROTEINS FACTOR 2"/>
    <property type="match status" value="1"/>
</dbReference>
<dbReference type="Pfam" id="PF10277">
    <property type="entry name" value="Frag1"/>
    <property type="match status" value="1"/>
</dbReference>
<name>PGAP2_XENLA</name>
<accession>Q5M9A7</accession>
<feature type="chain" id="PRO_0000326098" description="Acyltransferase PGAP2">
    <location>
        <begin position="1"/>
        <end position="254"/>
    </location>
</feature>
<feature type="topological domain" description="Cytoplasmic" evidence="3">
    <location>
        <begin position="1"/>
        <end position="24"/>
    </location>
</feature>
<feature type="transmembrane region" description="Helical" evidence="3">
    <location>
        <begin position="25"/>
        <end position="45"/>
    </location>
</feature>
<feature type="topological domain" description="Lumenal" evidence="3">
    <location>
        <begin position="46"/>
        <end position="113"/>
    </location>
</feature>
<feature type="transmembrane region" description="Helical" evidence="3">
    <location>
        <begin position="114"/>
        <end position="134"/>
    </location>
</feature>
<feature type="topological domain" description="Cytoplasmic" evidence="3">
    <location>
        <begin position="135"/>
        <end position="144"/>
    </location>
</feature>
<feature type="transmembrane region" description="Helical" evidence="3">
    <location>
        <begin position="145"/>
        <end position="165"/>
    </location>
</feature>
<feature type="topological domain" description="Lumenal" evidence="3">
    <location>
        <begin position="166"/>
        <end position="186"/>
    </location>
</feature>
<feature type="transmembrane region" description="Helical" evidence="3">
    <location>
        <begin position="187"/>
        <end position="207"/>
    </location>
</feature>
<feature type="topological domain" description="Cytoplasmic" evidence="3">
    <location>
        <begin position="208"/>
        <end position="210"/>
    </location>
</feature>
<feature type="transmembrane region" description="Helical" evidence="3">
    <location>
        <begin position="211"/>
        <end position="231"/>
    </location>
</feature>
<feature type="topological domain" description="Lumenal" evidence="3">
    <location>
        <begin position="232"/>
        <end position="254"/>
    </location>
</feature>